<feature type="chain" id="PRO_0000294978" description="Beta-fibrinogenase brevinase chain A">
    <location>
        <begin position="1"/>
        <end position="77"/>
    </location>
</feature>
<feature type="chain" id="PRO_0000294979" description="Beta-fibrinogenase brevinase chain B">
    <location>
        <begin position="78"/>
        <end position="233"/>
    </location>
</feature>
<feature type="domain" description="Peptidase S1" evidence="3">
    <location>
        <begin position="1"/>
        <end position="224"/>
    </location>
</feature>
<feature type="short sequence motif" description="Cell attachment site" evidence="2">
    <location>
        <begin position="176"/>
        <end position="178"/>
    </location>
</feature>
<feature type="active site" description="Charge relay system" evidence="1">
    <location>
        <position position="40"/>
    </location>
</feature>
<feature type="active site" description="Charge relay system" evidence="1">
    <location>
        <position position="85"/>
    </location>
</feature>
<feature type="active site" description="Charge relay system" evidence="1">
    <location>
        <position position="179"/>
    </location>
</feature>
<feature type="site" description="Cleavage">
    <location>
        <begin position="77"/>
        <end position="78"/>
    </location>
</feature>
<feature type="glycosylation site" description="N-linked (GlcNAc...) asparagine" evidence="2">
    <location>
        <position position="54"/>
    </location>
</feature>
<feature type="glycosylation site" description="N-linked (GlcNAc...) asparagine" evidence="2">
    <location>
        <position position="129"/>
    </location>
</feature>
<feature type="glycosylation site" description="N-linked (GlcNAc...) asparagine" evidence="2">
    <location>
        <position position="226"/>
    </location>
</feature>
<feature type="disulfide bond" description="Interchain (between A and B chains)" evidence="3">
    <location>
        <begin position="7"/>
        <end position="138"/>
    </location>
</feature>
<feature type="disulfide bond" evidence="3">
    <location>
        <begin position="25"/>
        <end position="41"/>
    </location>
</feature>
<feature type="disulfide bond" description="Interchain (between A and B chains)" evidence="3">
    <location>
        <begin position="73"/>
        <end position="231"/>
    </location>
</feature>
<feature type="disulfide bond" evidence="3">
    <location>
        <begin position="117"/>
        <end position="185"/>
    </location>
</feature>
<feature type="disulfide bond" evidence="3">
    <location>
        <begin position="149"/>
        <end position="164"/>
    </location>
</feature>
<feature type="disulfide bond" evidence="3">
    <location>
        <begin position="175"/>
        <end position="200"/>
    </location>
</feature>
<dbReference type="EC" id="3.4.21.-"/>
<dbReference type="EMBL" id="AJ243757">
    <property type="protein sequence ID" value="CAB65936.1"/>
    <property type="molecule type" value="mRNA"/>
</dbReference>
<dbReference type="SMR" id="Q9PT51"/>
<dbReference type="MEROPS" id="S01.341"/>
<dbReference type="GO" id="GO:0005576">
    <property type="term" value="C:extracellular region"/>
    <property type="evidence" value="ECO:0007669"/>
    <property type="project" value="UniProtKB-SubCell"/>
</dbReference>
<dbReference type="GO" id="GO:0030141">
    <property type="term" value="C:secretory granule"/>
    <property type="evidence" value="ECO:0007669"/>
    <property type="project" value="TreeGrafter"/>
</dbReference>
<dbReference type="GO" id="GO:0004252">
    <property type="term" value="F:serine-type endopeptidase activity"/>
    <property type="evidence" value="ECO:0007669"/>
    <property type="project" value="InterPro"/>
</dbReference>
<dbReference type="GO" id="GO:0090729">
    <property type="term" value="F:toxin activity"/>
    <property type="evidence" value="ECO:0007669"/>
    <property type="project" value="UniProtKB-KW"/>
</dbReference>
<dbReference type="GO" id="GO:0006508">
    <property type="term" value="P:proteolysis"/>
    <property type="evidence" value="ECO:0007669"/>
    <property type="project" value="UniProtKB-KW"/>
</dbReference>
<dbReference type="CDD" id="cd00190">
    <property type="entry name" value="Tryp_SPc"/>
    <property type="match status" value="1"/>
</dbReference>
<dbReference type="FunFam" id="2.40.10.10:FF:000158">
    <property type="entry name" value="Thrombin-like enzyme saxthrombin"/>
    <property type="match status" value="1"/>
</dbReference>
<dbReference type="FunFam" id="2.40.10.10:FF:000153">
    <property type="entry name" value="Venom plasminogen activator TSV-PA"/>
    <property type="match status" value="1"/>
</dbReference>
<dbReference type="Gene3D" id="2.40.10.10">
    <property type="entry name" value="Trypsin-like serine proteases"/>
    <property type="match status" value="2"/>
</dbReference>
<dbReference type="InterPro" id="IPR009003">
    <property type="entry name" value="Peptidase_S1_PA"/>
</dbReference>
<dbReference type="InterPro" id="IPR043504">
    <property type="entry name" value="Peptidase_S1_PA_chymotrypsin"/>
</dbReference>
<dbReference type="InterPro" id="IPR001314">
    <property type="entry name" value="Peptidase_S1A"/>
</dbReference>
<dbReference type="InterPro" id="IPR001254">
    <property type="entry name" value="Trypsin_dom"/>
</dbReference>
<dbReference type="InterPro" id="IPR018114">
    <property type="entry name" value="TRYPSIN_HIS"/>
</dbReference>
<dbReference type="InterPro" id="IPR033116">
    <property type="entry name" value="TRYPSIN_SER"/>
</dbReference>
<dbReference type="PANTHER" id="PTHR24271:SF47">
    <property type="entry name" value="KALLIKREIN-1"/>
    <property type="match status" value="1"/>
</dbReference>
<dbReference type="PANTHER" id="PTHR24271">
    <property type="entry name" value="KALLIKREIN-RELATED"/>
    <property type="match status" value="1"/>
</dbReference>
<dbReference type="Pfam" id="PF00089">
    <property type="entry name" value="Trypsin"/>
    <property type="match status" value="1"/>
</dbReference>
<dbReference type="PRINTS" id="PR00722">
    <property type="entry name" value="CHYMOTRYPSIN"/>
</dbReference>
<dbReference type="SMART" id="SM00020">
    <property type="entry name" value="Tryp_SPc"/>
    <property type="match status" value="1"/>
</dbReference>
<dbReference type="SUPFAM" id="SSF50494">
    <property type="entry name" value="Trypsin-like serine proteases"/>
    <property type="match status" value="1"/>
</dbReference>
<dbReference type="PROSITE" id="PS50240">
    <property type="entry name" value="TRYPSIN_DOM"/>
    <property type="match status" value="1"/>
</dbReference>
<dbReference type="PROSITE" id="PS00134">
    <property type="entry name" value="TRYPSIN_HIS"/>
    <property type="match status" value="1"/>
</dbReference>
<dbReference type="PROSITE" id="PS00135">
    <property type="entry name" value="TRYPSIN_SER"/>
    <property type="match status" value="1"/>
</dbReference>
<name>VSPB_GLOBL</name>
<organism>
    <name type="scientific">Gloydius blomhoffii</name>
    <name type="common">Mamushi</name>
    <name type="synonym">Agkistrodon halys blomhoffi</name>
    <dbReference type="NCBI Taxonomy" id="242054"/>
    <lineage>
        <taxon>Eukaryota</taxon>
        <taxon>Metazoa</taxon>
        <taxon>Chordata</taxon>
        <taxon>Craniata</taxon>
        <taxon>Vertebrata</taxon>
        <taxon>Euteleostomi</taxon>
        <taxon>Lepidosauria</taxon>
        <taxon>Squamata</taxon>
        <taxon>Bifurcata</taxon>
        <taxon>Unidentata</taxon>
        <taxon>Episquamata</taxon>
        <taxon>Toxicofera</taxon>
        <taxon>Serpentes</taxon>
        <taxon>Colubroidea</taxon>
        <taxon>Viperidae</taxon>
        <taxon>Crotalinae</taxon>
        <taxon>Gloydius</taxon>
    </lineage>
</organism>
<evidence type="ECO:0000250" key="1"/>
<evidence type="ECO:0000255" key="2"/>
<evidence type="ECO:0000255" key="3">
    <source>
        <dbReference type="PROSITE-ProRule" id="PRU00274"/>
    </source>
</evidence>
<evidence type="ECO:0000269" key="4">
    <source>
    </source>
</evidence>
<evidence type="ECO:0000305" key="5">
    <source>
    </source>
</evidence>
<reference key="1">
    <citation type="journal article" date="2000" name="Arch. Biochem. Biophys.">
        <title>cDNA cloning of brevinase, a heterogeneous two-chain fibrinolytic enzyme from Agkistrodon blomhoffii brevicaudus snake venom, by serial hybridization-polymerase chain reaction.</title>
        <authorList>
            <person name="Lee J.-W."/>
            <person name="Park W."/>
        </authorList>
    </citation>
    <scope>NUCLEOTIDE SEQUENCE [MRNA]</scope>
    <source>
        <tissue>Venom gland</tissue>
    </source>
</reference>
<reference key="2">
    <citation type="journal article" date="1999" name="Biochem. Biophys. Res. Commun.">
        <title>Purification and characterization of brevinase, a heterogeneous two-chain fibrinolytic enzyme from the venom of Korean snake, Agkistrodon blomhoffii brevicaudus.</title>
        <authorList>
            <person name="Lee J.-W."/>
            <person name="Seu J.-H."/>
            <person name="Rhee I.-K."/>
            <person name="Jin I."/>
            <person name="Kawamura Y."/>
            <person name="Park W."/>
        </authorList>
    </citation>
    <scope>PROTEIN SEQUENCE OF 1-30 AND 78-107</scope>
    <scope>FUNCTION</scope>
    <scope>ACTIVITY REGULATION</scope>
    <scope>BIOPHYSICOCHEMICAL PROPERTIES</scope>
    <scope>SUBUNIT</scope>
    <scope>SUBCELLULAR LOCATION</scope>
    <scope>TISSUE SPECIFICITY</scope>
    <source>
        <tissue>Venom</tissue>
    </source>
</reference>
<keyword id="KW-0903">Direct protein sequencing</keyword>
<keyword id="KW-1015">Disulfide bond</keyword>
<keyword id="KW-1206">Fibrinogenolytic toxin</keyword>
<keyword id="KW-1205">Fibrinolytic toxin</keyword>
<keyword id="KW-0325">Glycoprotein</keyword>
<keyword id="KW-1199">Hemostasis impairing toxin</keyword>
<keyword id="KW-0378">Hydrolase</keyword>
<keyword id="KW-0645">Protease</keyword>
<keyword id="KW-0964">Secreted</keyword>
<keyword id="KW-0720">Serine protease</keyword>
<keyword id="KW-0800">Toxin</keyword>
<accession>Q9PT51</accession>
<proteinExistence type="evidence at protein level"/>
<comment type="function">
    <text evidence="4">Snake venom serine protease that has fibrinogenolytic activities. Preferentially cleaves the Bbeta-chain (FGB) and more slowly the Aa-chain (FGA) of fibrinogen, but does not affect the gamma-chain. Also has fibrinolytic activity. May play a role in antithrombotic reaction as well as thrombolytic reaction.</text>
</comment>
<comment type="activity regulation">
    <text evidence="4">The fibrinolytic activity is completely inhibited by PMSF, diisopropylfluorophosphate (DFP), pefabloc, dithiothreitol (DTT) and Zn(2+), but not by Pepstatin A, E64, iodoacetate, chymostatin, tosyl-Lphenylalanine chloromethyl ketone (TPCK), soybean trypsin inhibitor (SBTI), phosphoramidon, Ca(2+), Co(2+), Cu(2+), Fe(2+), Mg(2+), Mn(2+), K(+), and Na(+).</text>
</comment>
<comment type="biophysicochemical properties">
    <phDependence>
        <text evidence="4">Optimum pH is from 5.5 to 8.5.</text>
    </phDependence>
</comment>
<comment type="subunit">
    <text evidence="4">Heterodimer of the brevinase A chain and the brevinase B chain.</text>
</comment>
<comment type="subcellular location">
    <subcellularLocation>
        <location evidence="4">Secreted</location>
    </subcellularLocation>
</comment>
<comment type="tissue specificity">
    <text evidence="4">Expressed by the venom gland.</text>
</comment>
<comment type="miscellaneous">
    <text evidence="5">Is devoid of fibrinogen clotting and caseinolytic activities.</text>
</comment>
<comment type="similarity">
    <text evidence="3">Belongs to the peptidase S1 family. Snake venom subfamily.</text>
</comment>
<protein>
    <recommendedName>
        <fullName>Beta-fibrinogenase brevinase</fullName>
        <ecNumber>3.4.21.-</ecNumber>
    </recommendedName>
    <alternativeName>
        <fullName>Snake venom serine protease</fullName>
        <shortName>SVSP</shortName>
    </alternativeName>
    <component>
        <recommendedName>
            <fullName>Beta-fibrinogenase brevinase chain A</fullName>
        </recommendedName>
    </component>
    <component>
        <recommendedName>
            <fullName>Beta-fibrinogenase brevinase chain B</fullName>
        </recommendedName>
    </component>
</protein>
<sequence>VIGGDECNINEHRFLALLYSERFQCGGTLINEEWVLTAAHCDMGNMYIYLGVHNVSVQYDDEQRRYPKKKYFCLSSRNYNQWDNDIMLIRLNRPVRNSAHIAPLSLPSGPPSVGSVCRVMGWGTITSPNETYPDVPHCANINILDYEVCRAAYAGLPATSRTLCAGILEGGKDSCRGDSGGPLICNGEIQGIVSWGGNICAQPREPGLYTKVFDYIDWIQSIIAGNTTVNCPP</sequence>